<sequence>MAAAANSGSSLPLFDCPTWAGKPPPGLHLDVVKGDKLIEKLIIDEKKYYLFGRNPDLCDFTIDHQSCSRVHAALVYHKHLKRVFLIDLNSTHGTFLGHIRLEPHKPQQIPIDSTVSFGASTRAYTLREKPQTLPSAVKGDEKMGGEDDELKGLLGLPEEETELDNLTEFNTAHNKRISTLTIEEGNLDIQRPKRKRKNSRVTFSEDDEIINPEDVDPSVGRFRNMVQTAVVPVKKKRVEGPGSLGLEESGSRRMQNFAFSGGLYGGLPPTHSEAGSQPHGIHGTALIGGLPMPYPNLAPDVDLTPVVPSAVNMNPAPNPAVYNPEAVNEPKKKKYAKEAWPGKKPTPSLLI</sequence>
<protein>
    <recommendedName>
        <fullName>Nuclear inhibitor of protein phosphatase 1</fullName>
        <shortName>NIPP-1</shortName>
    </recommendedName>
    <alternativeName>
        <fullName>Protein phosphatase 1 regulatory inhibitor subunit 8</fullName>
    </alternativeName>
    <domain>
        <recommendedName>
            <fullName>Activator of RNA decay</fullName>
            <ecNumber>3.1.4.-</ecNumber>
        </recommendedName>
        <alternativeName>
            <fullName>ARD-1</fullName>
        </alternativeName>
    </domain>
</protein>
<organism>
    <name type="scientific">Homo sapiens</name>
    <name type="common">Human</name>
    <dbReference type="NCBI Taxonomy" id="9606"/>
    <lineage>
        <taxon>Eukaryota</taxon>
        <taxon>Metazoa</taxon>
        <taxon>Chordata</taxon>
        <taxon>Craniata</taxon>
        <taxon>Vertebrata</taxon>
        <taxon>Euteleostomi</taxon>
        <taxon>Mammalia</taxon>
        <taxon>Eutheria</taxon>
        <taxon>Euarchontoglires</taxon>
        <taxon>Primates</taxon>
        <taxon>Haplorrhini</taxon>
        <taxon>Catarrhini</taxon>
        <taxon>Hominidae</taxon>
        <taxon>Homo</taxon>
    </lineage>
</organism>
<accession>Q12972</accession>
<accession>Q5TEJ2</accession>
<accession>Q5TEJ4</accession>
<accession>Q5TIF2</accession>
<accession>Q6PKF6</accession>
<accession>Q9UBH1</accession>
<accession>Q9UBZ0</accession>
<feature type="chain" id="PRO_0000071505" description="Nuclear inhibitor of protein phosphatase 1">
    <location>
        <begin position="1"/>
        <end position="351"/>
    </location>
</feature>
<feature type="domain" description="FHA" evidence="3">
    <location>
        <begin position="49"/>
        <end position="101"/>
    </location>
</feature>
<feature type="region of interest" description="Interaction with CDC5L, SF3B1 and MELK" evidence="6 10 12">
    <location>
        <begin position="1"/>
        <end position="142"/>
    </location>
</feature>
<feature type="region of interest" description="Interaction with EED" evidence="11">
    <location>
        <begin position="143"/>
        <end position="224"/>
    </location>
</feature>
<feature type="region of interest" description="Involved in PP-1 inhibition">
    <location>
        <begin position="191"/>
        <end position="200"/>
    </location>
</feature>
<feature type="region of interest" description="Involved in PP-1 binding">
    <location>
        <begin position="200"/>
        <end position="203"/>
    </location>
</feature>
<feature type="region of interest" description="Interaction with EED" evidence="11">
    <location>
        <begin position="310"/>
        <end position="329"/>
    </location>
</feature>
<feature type="region of interest" description="Disordered" evidence="4">
    <location>
        <begin position="316"/>
        <end position="351"/>
    </location>
</feature>
<feature type="region of interest" description="RNA-binding">
    <location>
        <begin position="330"/>
        <end position="351"/>
    </location>
</feature>
<feature type="region of interest" description="Involved in PP-1 inhibition">
    <location>
        <begin position="331"/>
        <end position="337"/>
    </location>
</feature>
<feature type="short sequence motif" description="Nuclear localization signal 1" evidence="7">
    <location>
        <begin position="185"/>
        <end position="209"/>
    </location>
</feature>
<feature type="short sequence motif" description="Nuclear localization signal 2" evidence="7">
    <location>
        <begin position="210"/>
        <end position="240"/>
    </location>
</feature>
<feature type="modified residue" description="Phosphothreonine" evidence="2">
    <location>
        <position position="161"/>
    </location>
</feature>
<feature type="modified residue" description="Phosphoserine" evidence="2">
    <location>
        <position position="178"/>
    </location>
</feature>
<feature type="modified residue" description="Phosphoserine" evidence="2">
    <location>
        <position position="199"/>
    </location>
</feature>
<feature type="modified residue" description="Phosphoserine" evidence="2">
    <location>
        <position position="204"/>
    </location>
</feature>
<feature type="modified residue" description="Phosphoserine" evidence="19">
    <location>
        <position position="249"/>
    </location>
</feature>
<feature type="modified residue" description="Phosphotyrosine; by LYN; in vitro" evidence="8">
    <location>
        <position position="264"/>
    </location>
</feature>
<feature type="modified residue" description="Phosphotyrosine" evidence="18">
    <location>
        <position position="335"/>
    </location>
</feature>
<feature type="splice variant" id="VSP_005120" description="In isoform Gamma." evidence="17">
    <location>
        <begin position="1"/>
        <end position="224"/>
    </location>
</feature>
<feature type="splice variant" id="VSP_005119" description="In isoform Beta." evidence="15 16">
    <location>
        <begin position="1"/>
        <end position="142"/>
    </location>
</feature>
<feature type="mutagenesis site" description="Abolishes interaction with CDC5L, SF3B1 and MELK, and localization in nuclear speckles. No effect on repressor activity." evidence="6 7 10 11 12">
    <original>SRVH</original>
    <variation>AAAA</variation>
    <location>
        <begin position="68"/>
        <end position="71"/>
    </location>
</feature>
<feature type="mutagenesis site" description="No effect on interaction with EED." evidence="11">
    <original>KRKRK</original>
    <variation>AAAAA</variation>
    <location>
        <begin position="193"/>
        <end position="197"/>
    </location>
</feature>
<feature type="mutagenesis site" description="Abolishes nuclear import; when associated with A-234--237-A." evidence="7">
    <original>KRK</original>
    <variation>AAA</variation>
    <location>
        <begin position="195"/>
        <end position="197"/>
    </location>
</feature>
<feature type="mutagenesis site" description="No change in subcellular location, no effect on interaction with EED or repressor activity; when associated with A-204 or D-204." evidence="7 11">
    <original>S</original>
    <variation>A</variation>
    <variation>D</variation>
    <location>
        <position position="199"/>
    </location>
</feature>
<feature type="mutagenesis site" description="Reduces PP-1 binding, no effect on subcellular location or repressor activity and prevents retargeting of PPP1CA and PPP1CC to nuclear speckles; when associated with A-203." evidence="7 9 11">
    <original>V</original>
    <variation>A</variation>
    <location>
        <position position="201"/>
    </location>
</feature>
<feature type="mutagenesis site" description="Reduces PP-1 binding, no effect on subcellular location or repressor activity and prevents retargeting of PPP1CA and PPP1CC to nuclear speckles; when associated with A-201." evidence="7 9 11">
    <original>F</original>
    <variation>A</variation>
    <location>
        <position position="203"/>
    </location>
</feature>
<feature type="mutagenesis site" description="No change in subcellular location, no effect on interaction with EED or repressor activity; when associated with A-199 or D-199." evidence="7 11">
    <original>S</original>
    <variation>A</variation>
    <variation>D</variation>
    <location>
        <position position="204"/>
    </location>
</feature>
<feature type="mutagenesis site" description="Abolishes nuclear import; when associated with A-195-197-A." evidence="7">
    <original>KKKR</original>
    <variation>AAAA</variation>
    <location>
        <begin position="234"/>
        <end position="237"/>
    </location>
</feature>
<feature type="mutagenesis site" description="Abolishes in vitro phosphorylation of isoform gamma by Lyn." evidence="8">
    <original>Y</original>
    <variation>D</variation>
    <location>
        <position position="264"/>
    </location>
</feature>
<feature type="mutagenesis site" description="Decreases the ability of isoform Gamma to bind and inhibit PP-1." evidence="8">
    <original>Y</original>
    <variation>D</variation>
    <location>
        <position position="335"/>
    </location>
</feature>
<feature type="mutagenesis site" description="No effect on the ability of isoform Gamma to inhibit PP-1." evidence="8">
    <original>T</original>
    <variation>D</variation>
    <location>
        <position position="346"/>
    </location>
</feature>
<feature type="mutagenesis site" description="No effect on the ability of isoform Gamma to inhibit PP-1." evidence="8">
    <original>S</original>
    <variation>D</variation>
    <location>
        <position position="348"/>
    </location>
</feature>
<feature type="helix" evidence="20">
    <location>
        <begin position="162"/>
        <end position="174"/>
    </location>
</feature>
<feature type="strand" evidence="20">
    <location>
        <begin position="208"/>
        <end position="210"/>
    </location>
</feature>
<gene>
    <name type="primary">PPP1R8</name>
    <name type="synonym">ARD1</name>
    <name type="synonym">NIPP1</name>
</gene>
<proteinExistence type="evidence at protein level"/>
<reference key="1">
    <citation type="journal article" date="1994" name="Proc. Natl. Acad. Sci. U.S.A.">
        <title>ard-1: a human gene that reverses the effects of temperature-sensitive and deletion mutations in the Escherichia coli rne gene and encodes an activity producing RNase E-like cleavages.</title>
        <authorList>
            <person name="Wang M."/>
            <person name="Cohen S.N."/>
        </authorList>
    </citation>
    <scope>NUCLEOTIDE SEQUENCE [MRNA] (ISOFORM GAMMA)</scope>
    <source>
        <tissue>B-cell</tissue>
    </source>
</reference>
<reference key="2">
    <citation type="journal article" date="1999" name="Eur. J. Biochem.">
        <title>Organization and alternate splice products of the gene encoding nuclear inhibitor of protein phosphatase-1 (NIPP-1).</title>
        <authorList>
            <person name="Van Eynde A."/>
            <person name="Perez-Callejon E."/>
            <person name="Schoenmakers E."/>
            <person name="Jacquemin M."/>
            <person name="Stalmans W."/>
            <person name="Bollen M."/>
        </authorList>
    </citation>
    <scope>NUCLEOTIDE SEQUENCE [GENOMIC DNA / MRNA] (ISOFORMS ALPHA AND BETA)</scope>
    <scope>ALTERNATIVE SPLICING</scope>
    <scope>TISSUE SPECIFICITY</scope>
    <source>
        <tissue>Parathyroid</tissue>
        <tissue>T-cell</tissue>
    </source>
</reference>
<reference key="3">
    <citation type="submission" date="1999-02" db="EMBL/GenBank/DDBJ databases">
        <title>Complete cDNA sequence of NIPP-1 from human breast cancer cells.</title>
        <authorList>
            <person name="Liu J.P."/>
            <person name="Yang Z."/>
            <person name="Li H."/>
        </authorList>
    </citation>
    <scope>NUCLEOTIDE SEQUENCE [MRNA] (ISOFORM ALPHA)</scope>
    <source>
        <tissue>Mammary cancer</tissue>
    </source>
</reference>
<reference key="4">
    <citation type="journal article" date="2004" name="Nat. Genet.">
        <title>Complete sequencing and characterization of 21,243 full-length human cDNAs.</title>
        <authorList>
            <person name="Ota T."/>
            <person name="Suzuki Y."/>
            <person name="Nishikawa T."/>
            <person name="Otsuki T."/>
            <person name="Sugiyama T."/>
            <person name="Irie R."/>
            <person name="Wakamatsu A."/>
            <person name="Hayashi K."/>
            <person name="Sato H."/>
            <person name="Nagai K."/>
            <person name="Kimura K."/>
            <person name="Makita H."/>
            <person name="Sekine M."/>
            <person name="Obayashi M."/>
            <person name="Nishi T."/>
            <person name="Shibahara T."/>
            <person name="Tanaka T."/>
            <person name="Ishii S."/>
            <person name="Yamamoto J."/>
            <person name="Saito K."/>
            <person name="Kawai Y."/>
            <person name="Isono Y."/>
            <person name="Nakamura Y."/>
            <person name="Nagahari K."/>
            <person name="Murakami K."/>
            <person name="Yasuda T."/>
            <person name="Iwayanagi T."/>
            <person name="Wagatsuma M."/>
            <person name="Shiratori A."/>
            <person name="Sudo H."/>
            <person name="Hosoiri T."/>
            <person name="Kaku Y."/>
            <person name="Kodaira H."/>
            <person name="Kondo H."/>
            <person name="Sugawara M."/>
            <person name="Takahashi M."/>
            <person name="Kanda K."/>
            <person name="Yokoi T."/>
            <person name="Furuya T."/>
            <person name="Kikkawa E."/>
            <person name="Omura Y."/>
            <person name="Abe K."/>
            <person name="Kamihara K."/>
            <person name="Katsuta N."/>
            <person name="Sato K."/>
            <person name="Tanikawa M."/>
            <person name="Yamazaki M."/>
            <person name="Ninomiya K."/>
            <person name="Ishibashi T."/>
            <person name="Yamashita H."/>
            <person name="Murakawa K."/>
            <person name="Fujimori K."/>
            <person name="Tanai H."/>
            <person name="Kimata M."/>
            <person name="Watanabe M."/>
            <person name="Hiraoka S."/>
            <person name="Chiba Y."/>
            <person name="Ishida S."/>
            <person name="Ono Y."/>
            <person name="Takiguchi S."/>
            <person name="Watanabe S."/>
            <person name="Yosida M."/>
            <person name="Hotuta T."/>
            <person name="Kusano J."/>
            <person name="Kanehori K."/>
            <person name="Takahashi-Fujii A."/>
            <person name="Hara H."/>
            <person name="Tanase T.-O."/>
            <person name="Nomura Y."/>
            <person name="Togiya S."/>
            <person name="Komai F."/>
            <person name="Hara R."/>
            <person name="Takeuchi K."/>
            <person name="Arita M."/>
            <person name="Imose N."/>
            <person name="Musashino K."/>
            <person name="Yuuki H."/>
            <person name="Oshima A."/>
            <person name="Sasaki N."/>
            <person name="Aotsuka S."/>
            <person name="Yoshikawa Y."/>
            <person name="Matsunawa H."/>
            <person name="Ichihara T."/>
            <person name="Shiohata N."/>
            <person name="Sano S."/>
            <person name="Moriya S."/>
            <person name="Momiyama H."/>
            <person name="Satoh N."/>
            <person name="Takami S."/>
            <person name="Terashima Y."/>
            <person name="Suzuki O."/>
            <person name="Nakagawa S."/>
            <person name="Senoh A."/>
            <person name="Mizoguchi H."/>
            <person name="Goto Y."/>
            <person name="Shimizu F."/>
            <person name="Wakebe H."/>
            <person name="Hishigaki H."/>
            <person name="Watanabe T."/>
            <person name="Sugiyama A."/>
            <person name="Takemoto M."/>
            <person name="Kawakami B."/>
            <person name="Yamazaki M."/>
            <person name="Watanabe K."/>
            <person name="Kumagai A."/>
            <person name="Itakura S."/>
            <person name="Fukuzumi Y."/>
            <person name="Fujimori Y."/>
            <person name="Komiyama M."/>
            <person name="Tashiro H."/>
            <person name="Tanigami A."/>
            <person name="Fujiwara T."/>
            <person name="Ono T."/>
            <person name="Yamada K."/>
            <person name="Fujii Y."/>
            <person name="Ozaki K."/>
            <person name="Hirao M."/>
            <person name="Ohmori Y."/>
            <person name="Kawabata A."/>
            <person name="Hikiji T."/>
            <person name="Kobatake N."/>
            <person name="Inagaki H."/>
            <person name="Ikema Y."/>
            <person name="Okamoto S."/>
            <person name="Okitani R."/>
            <person name="Kawakami T."/>
            <person name="Noguchi S."/>
            <person name="Itoh T."/>
            <person name="Shigeta K."/>
            <person name="Senba T."/>
            <person name="Matsumura K."/>
            <person name="Nakajima Y."/>
            <person name="Mizuno T."/>
            <person name="Morinaga M."/>
            <person name="Sasaki M."/>
            <person name="Togashi T."/>
            <person name="Oyama M."/>
            <person name="Hata H."/>
            <person name="Watanabe M."/>
            <person name="Komatsu T."/>
            <person name="Mizushima-Sugano J."/>
            <person name="Satoh T."/>
            <person name="Shirai Y."/>
            <person name="Takahashi Y."/>
            <person name="Nakagawa K."/>
            <person name="Okumura K."/>
            <person name="Nagase T."/>
            <person name="Nomura N."/>
            <person name="Kikuchi H."/>
            <person name="Masuho Y."/>
            <person name="Yamashita R."/>
            <person name="Nakai K."/>
            <person name="Yada T."/>
            <person name="Nakamura Y."/>
            <person name="Ohara O."/>
            <person name="Isogai T."/>
            <person name="Sugano S."/>
        </authorList>
    </citation>
    <scope>NUCLEOTIDE SEQUENCE [LARGE SCALE MRNA] (ISOFORM ALPHA)</scope>
    <source>
        <tissue>Synovium</tissue>
    </source>
</reference>
<reference key="5">
    <citation type="journal article" date="2006" name="Nature">
        <title>The DNA sequence and biological annotation of human chromosome 1.</title>
        <authorList>
            <person name="Gregory S.G."/>
            <person name="Barlow K.F."/>
            <person name="McLay K.E."/>
            <person name="Kaul R."/>
            <person name="Swarbreck D."/>
            <person name="Dunham A."/>
            <person name="Scott C.E."/>
            <person name="Howe K.L."/>
            <person name="Woodfine K."/>
            <person name="Spencer C.C.A."/>
            <person name="Jones M.C."/>
            <person name="Gillson C."/>
            <person name="Searle S."/>
            <person name="Zhou Y."/>
            <person name="Kokocinski F."/>
            <person name="McDonald L."/>
            <person name="Evans R."/>
            <person name="Phillips K."/>
            <person name="Atkinson A."/>
            <person name="Cooper R."/>
            <person name="Jones C."/>
            <person name="Hall R.E."/>
            <person name="Andrews T.D."/>
            <person name="Lloyd C."/>
            <person name="Ainscough R."/>
            <person name="Almeida J.P."/>
            <person name="Ambrose K.D."/>
            <person name="Anderson F."/>
            <person name="Andrew R.W."/>
            <person name="Ashwell R.I.S."/>
            <person name="Aubin K."/>
            <person name="Babbage A.K."/>
            <person name="Bagguley C.L."/>
            <person name="Bailey J."/>
            <person name="Beasley H."/>
            <person name="Bethel G."/>
            <person name="Bird C.P."/>
            <person name="Bray-Allen S."/>
            <person name="Brown J.Y."/>
            <person name="Brown A.J."/>
            <person name="Buckley D."/>
            <person name="Burton J."/>
            <person name="Bye J."/>
            <person name="Carder C."/>
            <person name="Chapman J.C."/>
            <person name="Clark S.Y."/>
            <person name="Clarke G."/>
            <person name="Clee C."/>
            <person name="Cobley V."/>
            <person name="Collier R.E."/>
            <person name="Corby N."/>
            <person name="Coville G.J."/>
            <person name="Davies J."/>
            <person name="Deadman R."/>
            <person name="Dunn M."/>
            <person name="Earthrowl M."/>
            <person name="Ellington A.G."/>
            <person name="Errington H."/>
            <person name="Frankish A."/>
            <person name="Frankland J."/>
            <person name="French L."/>
            <person name="Garner P."/>
            <person name="Garnett J."/>
            <person name="Gay L."/>
            <person name="Ghori M.R.J."/>
            <person name="Gibson R."/>
            <person name="Gilby L.M."/>
            <person name="Gillett W."/>
            <person name="Glithero R.J."/>
            <person name="Grafham D.V."/>
            <person name="Griffiths C."/>
            <person name="Griffiths-Jones S."/>
            <person name="Grocock R."/>
            <person name="Hammond S."/>
            <person name="Harrison E.S.I."/>
            <person name="Hart E."/>
            <person name="Haugen E."/>
            <person name="Heath P.D."/>
            <person name="Holmes S."/>
            <person name="Holt K."/>
            <person name="Howden P.J."/>
            <person name="Hunt A.R."/>
            <person name="Hunt S.E."/>
            <person name="Hunter G."/>
            <person name="Isherwood J."/>
            <person name="James R."/>
            <person name="Johnson C."/>
            <person name="Johnson D."/>
            <person name="Joy A."/>
            <person name="Kay M."/>
            <person name="Kershaw J.K."/>
            <person name="Kibukawa M."/>
            <person name="Kimberley A.M."/>
            <person name="King A."/>
            <person name="Knights A.J."/>
            <person name="Lad H."/>
            <person name="Laird G."/>
            <person name="Lawlor S."/>
            <person name="Leongamornlert D.A."/>
            <person name="Lloyd D.M."/>
            <person name="Loveland J."/>
            <person name="Lovell J."/>
            <person name="Lush M.J."/>
            <person name="Lyne R."/>
            <person name="Martin S."/>
            <person name="Mashreghi-Mohammadi M."/>
            <person name="Matthews L."/>
            <person name="Matthews N.S.W."/>
            <person name="McLaren S."/>
            <person name="Milne S."/>
            <person name="Mistry S."/>
            <person name="Moore M.J.F."/>
            <person name="Nickerson T."/>
            <person name="O'Dell C.N."/>
            <person name="Oliver K."/>
            <person name="Palmeiri A."/>
            <person name="Palmer S.A."/>
            <person name="Parker A."/>
            <person name="Patel D."/>
            <person name="Pearce A.V."/>
            <person name="Peck A.I."/>
            <person name="Pelan S."/>
            <person name="Phelps K."/>
            <person name="Phillimore B.J."/>
            <person name="Plumb R."/>
            <person name="Rajan J."/>
            <person name="Raymond C."/>
            <person name="Rouse G."/>
            <person name="Saenphimmachak C."/>
            <person name="Sehra H.K."/>
            <person name="Sheridan E."/>
            <person name="Shownkeen R."/>
            <person name="Sims S."/>
            <person name="Skuce C.D."/>
            <person name="Smith M."/>
            <person name="Steward C."/>
            <person name="Subramanian S."/>
            <person name="Sycamore N."/>
            <person name="Tracey A."/>
            <person name="Tromans A."/>
            <person name="Van Helmond Z."/>
            <person name="Wall M."/>
            <person name="Wallis J.M."/>
            <person name="White S."/>
            <person name="Whitehead S.L."/>
            <person name="Wilkinson J.E."/>
            <person name="Willey D.L."/>
            <person name="Williams H."/>
            <person name="Wilming L."/>
            <person name="Wray P.W."/>
            <person name="Wu Z."/>
            <person name="Coulson A."/>
            <person name="Vaudin M."/>
            <person name="Sulston J.E."/>
            <person name="Durbin R.M."/>
            <person name="Hubbard T."/>
            <person name="Wooster R."/>
            <person name="Dunham I."/>
            <person name="Carter N.P."/>
            <person name="McVean G."/>
            <person name="Ross M.T."/>
            <person name="Harrow J."/>
            <person name="Olson M.V."/>
            <person name="Beck S."/>
            <person name="Rogers J."/>
            <person name="Bentley D.R."/>
        </authorList>
    </citation>
    <scope>NUCLEOTIDE SEQUENCE [LARGE SCALE GENOMIC DNA]</scope>
</reference>
<reference key="6">
    <citation type="submission" date="2005-09" db="EMBL/GenBank/DDBJ databases">
        <authorList>
            <person name="Mural R.J."/>
            <person name="Istrail S."/>
            <person name="Sutton G.G."/>
            <person name="Florea L."/>
            <person name="Halpern A.L."/>
            <person name="Mobarry C.M."/>
            <person name="Lippert R."/>
            <person name="Walenz B."/>
            <person name="Shatkay H."/>
            <person name="Dew I."/>
            <person name="Miller J.R."/>
            <person name="Flanigan M.J."/>
            <person name="Edwards N.J."/>
            <person name="Bolanos R."/>
            <person name="Fasulo D."/>
            <person name="Halldorsson B.V."/>
            <person name="Hannenhalli S."/>
            <person name="Turner R."/>
            <person name="Yooseph S."/>
            <person name="Lu F."/>
            <person name="Nusskern D.R."/>
            <person name="Shue B.C."/>
            <person name="Zheng X.H."/>
            <person name="Zhong F."/>
            <person name="Delcher A.L."/>
            <person name="Huson D.H."/>
            <person name="Kravitz S.A."/>
            <person name="Mouchard L."/>
            <person name="Reinert K."/>
            <person name="Remington K.A."/>
            <person name="Clark A.G."/>
            <person name="Waterman M.S."/>
            <person name="Eichler E.E."/>
            <person name="Adams M.D."/>
            <person name="Hunkapiller M.W."/>
            <person name="Myers E.W."/>
            <person name="Venter J.C."/>
        </authorList>
    </citation>
    <scope>NUCLEOTIDE SEQUENCE [LARGE SCALE GENOMIC DNA]</scope>
</reference>
<reference key="7">
    <citation type="journal article" date="2004" name="Genome Res.">
        <title>The status, quality, and expansion of the NIH full-length cDNA project: the Mammalian Gene Collection (MGC).</title>
        <authorList>
            <consortium name="The MGC Project Team"/>
        </authorList>
    </citation>
    <scope>NUCLEOTIDE SEQUENCE [LARGE SCALE MRNA] (ISOFORM BETA)</scope>
    <scope>NUCLEOTIDE SEQUENCE [LARGE SCALE MRNA] OF 34-351 (ISOFORM ALPHA)</scope>
    <source>
        <tissue>Lymph</tissue>
    </source>
</reference>
<reference key="8">
    <citation type="journal article" date="1995" name="J. Biol. Chem.">
        <title>Molecular cloning of NIPP-1, a nuclear inhibitor of protein phosphatase-1, reveals homology with polypeptides involved in RNA processing.</title>
        <authorList>
            <person name="Van Eynde A."/>
            <person name="Wera S."/>
            <person name="Beullens M."/>
            <person name="Torrekens S."/>
            <person name="Van Leuven F."/>
            <person name="Stalmans W."/>
            <person name="Bollen M."/>
        </authorList>
    </citation>
    <scope>TISSUE SPECIFICITY</scope>
</reference>
<reference key="9">
    <citation type="journal article" date="1997" name="J. Biol. Chem.">
        <title>ARD-1 cDNA from human cells encodes a site-specific single-strand endoribonuclease that functionally resembles Escherichia coli RNase E.</title>
        <authorList>
            <person name="Claverie-Martin F."/>
            <person name="Wang M."/>
            <person name="Cohen S.N."/>
        </authorList>
    </citation>
    <scope>CHARACTERIZATION (ISOFORM GAMMA)</scope>
</reference>
<reference key="10">
    <citation type="journal article" date="1999" name="Biochem. J.">
        <title>Mapping of the RNA-binding and endoribonuclease domains of NIPP1, a nuclear targeting subunit of protein phosphatase 1.</title>
        <authorList>
            <person name="Jin Q."/>
            <person name="Beullens M."/>
            <person name="Jagiello I."/>
            <person name="Van Eynde A."/>
            <person name="Vulsteke V."/>
            <person name="Stalmans W."/>
            <person name="Bollen M."/>
        </authorList>
    </citation>
    <scope>RNA-BINDING</scope>
    <scope>CHARACTERIZATION (ISOFORM GAMMA)</scope>
    <scope>FUNCTION</scope>
</reference>
<reference key="11">
    <citation type="journal article" date="1999" name="Gene">
        <title>Alternative splicing regulates the production of ARD-1 endoribonuclease and NIPP-1, an inhibitor of protein phosphatase-1, as isoforms encoded by the same gene.</title>
        <authorList>
            <person name="Chang A.C.Y."/>
            <person name="Sohlberg B."/>
            <person name="Trinkle-Mulcahy L."/>
            <person name="Claverie-Martin F."/>
            <person name="Cohen P."/>
            <person name="Cohen S.N."/>
        </authorList>
    </citation>
    <scope>IDENTIFICATION OF ALTERNATIVE SPLICING IN ISOFORM GAMMA</scope>
</reference>
<reference key="12">
    <citation type="journal article" date="2000" name="Biochem. J.">
        <title>The C-terminus of NIPP1 (nuclear inhibitor of protein phosphatase-1) contains a novel binding site for protein phosphatase-1 that is controlled by tyrosine phosphorylation and RNA binding.</title>
        <authorList>
            <person name="Beullens M."/>
            <person name="Vulsteke V."/>
            <person name="Van Eynde A."/>
            <person name="Jagiello I."/>
            <person name="Stalmans W."/>
            <person name="Bollen M."/>
        </authorList>
    </citation>
    <scope>FUNCTION</scope>
    <scope>MUTAGENESIS OF TYR-264; TYR-335; THR-346 AND SER-348</scope>
    <scope>PHOSPHORYLATION AT TYR-264 AND TYR-335</scope>
</reference>
<reference key="13">
    <citation type="journal article" date="2000" name="J. Biol. Chem.">
        <title>NIPP1-mediated interaction of protein phosphatase-1 with CDC5L, a regulator of pre-mRNA splicing and mitotic entry.</title>
        <authorList>
            <person name="Boudrez A."/>
            <person name="Beullens M."/>
            <person name="Groenen P.M.A."/>
            <person name="Van Eynde A."/>
            <person name="Vulsteke V."/>
            <person name="Jagiello I."/>
            <person name="Murray M."/>
            <person name="Krainer A.R."/>
            <person name="Stalmans W."/>
            <person name="Bollen M."/>
        </authorList>
    </citation>
    <scope>INTERACTION WITH CDC5L</scope>
    <scope>SUBCELLULAR LOCATION</scope>
    <scope>MUTAGENESIS OF 68-SER--HIS-71</scope>
    <scope>FUNCTION</scope>
</reference>
<reference key="14">
    <citation type="journal article" date="2000" name="J. Cell Sci.">
        <title>Nuclear and subnuclear targeting sequences of the protein phosphatase-1 regulator NIPP1.</title>
        <authorList>
            <person name="Jagiello I."/>
            <person name="Van Eynde A."/>
            <person name="Vulsteke V."/>
            <person name="Beullens M."/>
            <person name="Boudrez A."/>
            <person name="Keppens S."/>
            <person name="Stalmans W."/>
            <person name="Bollen M."/>
        </authorList>
    </citation>
    <scope>NUCLEAR LOCALIZATION SIGNALS</scope>
    <scope>MUTAGENESIS OF 68-SER--HIS-71; 195-LYS--LYS-197; SER-199; VAL-201; PHE-203; SER-204 AND 234-LYS--ARG-237</scope>
    <scope>SUBCELLULAR LOCATION</scope>
</reference>
<reference key="15">
    <citation type="journal article" date="2001" name="J. Cell Sci.">
        <title>Dynamic targeting of protein phosphatase 1 within the nuclei of living mammalian cells.</title>
        <authorList>
            <person name="Trinkle-Mulcahy L."/>
            <person name="Sleeman J.E."/>
            <person name="Lamond A.I."/>
        </authorList>
    </citation>
    <scope>SUBCELLULAR LOCATION</scope>
    <scope>INTERACTION WITH PPP1CA AND PPP1CC</scope>
    <scope>MUTAGENESIS OF VAL-201 AND PHE-203</scope>
</reference>
<reference key="16">
    <citation type="journal article" date="2002" name="J. Biol. Chem.">
        <title>The protein phosphatase-1 regulator NIPP1 is also a splicing factor involved in a late step of spliceosome assembly.</title>
        <authorList>
            <person name="Beullens M."/>
            <person name="Bollen M."/>
        </authorList>
    </citation>
    <scope>IDENTIFICATION AS PART OF THE SPLICEOSOME</scope>
    <scope>FUNCTION</scope>
</reference>
<reference key="17">
    <citation type="journal article" date="2002" name="J. Biol. Chem.">
        <title>Phosphorylation-dependent interaction between the splicing factors SAP155 and NIPP1.</title>
        <authorList>
            <person name="Boudrez A."/>
            <person name="Beullens M."/>
            <person name="Waelkens E."/>
            <person name="Stalmans W."/>
            <person name="Bollen M."/>
        </authorList>
    </citation>
    <scope>INTERACTION WITH SF3B1</scope>
    <scope>MUTAGENESIS OF 68-SER--HIS-71</scope>
</reference>
<reference key="18">
    <citation type="journal article" date="2003" name="J. Biol. Chem.">
        <title>The protein phosphatase-1 (PP1) regulator, nuclear inhibitor of PP1 (NIPP1), interacts with the polycomb group protein, embryonic ectoderm development (EED), and functions as a transcriptional repressor.</title>
        <authorList>
            <person name="Jin Q."/>
            <person name="van Eynde A."/>
            <person name="Beullens M."/>
            <person name="Roy N."/>
            <person name="Thiel G."/>
            <person name="Stalmans W."/>
            <person name="Bollen M."/>
        </authorList>
    </citation>
    <scope>DNA-BINDING</scope>
    <scope>INTERACTION WITH EED</scope>
    <scope>IDENTIFICATION IN A COMPLEX WITH EED; HDAC2 AND PP1</scope>
    <scope>MUTAGENESIS OF 68-SER--HIS-71; 193-LYS--LYS-197; SER-199; VAL-201; PHE-203 AND SER-204</scope>
    <scope>FUNCTION</scope>
</reference>
<reference key="19">
    <citation type="journal article" date="2004" name="J. Biol. Chem.">
        <title>Inhibition of spliceosome assembly by the cell cycle-regulated protein kinase MELK and involvement of splicing factor NIPP1.</title>
        <authorList>
            <person name="Vulsteke V."/>
            <person name="Beullens M."/>
            <person name="Boudrez A."/>
            <person name="Keppens S."/>
            <person name="Van Eynde A."/>
            <person name="Rider M.H."/>
            <person name="Stalmans W."/>
            <person name="Bollen M."/>
        </authorList>
    </citation>
    <scope>INTERACTION WITH MELK</scope>
    <scope>MUTAGENESIS OF 68-SER--HIS-71</scope>
</reference>
<reference key="20">
    <citation type="journal article" date="2008" name="Proc. Natl. Acad. Sci. U.S.A.">
        <title>A quantitative atlas of mitotic phosphorylation.</title>
        <authorList>
            <person name="Dephoure N."/>
            <person name="Zhou C."/>
            <person name="Villen J."/>
            <person name="Beausoleil S.A."/>
            <person name="Bakalarski C.E."/>
            <person name="Elledge S.J."/>
            <person name="Gygi S.P."/>
        </authorList>
    </citation>
    <scope>IDENTIFICATION BY MASS SPECTROMETRY [LARGE SCALE ANALYSIS]</scope>
    <source>
        <tissue>Cervix carcinoma</tissue>
    </source>
</reference>
<reference key="21">
    <citation type="journal article" date="2010" name="J. Biol. Chem.">
        <title>Identification and characterization of a novel human PP1 phosphatase complex.</title>
        <authorList>
            <person name="Lee J.H."/>
            <person name="You J."/>
            <person name="Dobrota E."/>
            <person name="Skalnik D.G."/>
        </authorList>
    </citation>
    <scope>INTERACTION WITH PPP1CA; PPP1CB AND PPP1CC</scope>
</reference>
<reference key="22">
    <citation type="journal article" date="2010" name="Sci. Signal.">
        <title>Quantitative phosphoproteomics reveals widespread full phosphorylation site occupancy during mitosis.</title>
        <authorList>
            <person name="Olsen J.V."/>
            <person name="Vermeulen M."/>
            <person name="Santamaria A."/>
            <person name="Kumar C."/>
            <person name="Miller M.L."/>
            <person name="Jensen L.J."/>
            <person name="Gnad F."/>
            <person name="Cox J."/>
            <person name="Jensen T.S."/>
            <person name="Nigg E.A."/>
            <person name="Brunak S."/>
            <person name="Mann M."/>
        </authorList>
    </citation>
    <scope>IDENTIFICATION BY MASS SPECTROMETRY [LARGE SCALE ANALYSIS]</scope>
    <source>
        <tissue>Cervix carcinoma</tissue>
    </source>
</reference>
<reference key="23">
    <citation type="journal article" date="2011" name="BMC Syst. Biol.">
        <title>Initial characterization of the human central proteome.</title>
        <authorList>
            <person name="Burkard T.R."/>
            <person name="Planyavsky M."/>
            <person name="Kaupe I."/>
            <person name="Breitwieser F.P."/>
            <person name="Buerckstuemmer T."/>
            <person name="Bennett K.L."/>
            <person name="Superti-Furga G."/>
            <person name="Colinge J."/>
        </authorList>
    </citation>
    <scope>IDENTIFICATION BY MASS SPECTROMETRY [LARGE SCALE ANALYSIS]</scope>
</reference>
<reference key="24">
    <citation type="journal article" date="2011" name="Sci. Signal.">
        <title>System-wide temporal characterization of the proteome and phosphoproteome of human embryonic stem cell differentiation.</title>
        <authorList>
            <person name="Rigbolt K.T."/>
            <person name="Prokhorova T.A."/>
            <person name="Akimov V."/>
            <person name="Henningsen J."/>
            <person name="Johansen P.T."/>
            <person name="Kratchmarova I."/>
            <person name="Kassem M."/>
            <person name="Mann M."/>
            <person name="Olsen J.V."/>
            <person name="Blagoev B."/>
        </authorList>
    </citation>
    <scope>IDENTIFICATION BY MASS SPECTROMETRY [LARGE SCALE ANALYSIS]</scope>
</reference>
<reference key="25">
    <citation type="journal article" date="2013" name="J. Proteome Res.">
        <title>Toward a comprehensive characterization of a human cancer cell phosphoproteome.</title>
        <authorList>
            <person name="Zhou H."/>
            <person name="Di Palma S."/>
            <person name="Preisinger C."/>
            <person name="Peng M."/>
            <person name="Polat A.N."/>
            <person name="Heck A.J."/>
            <person name="Mohammed S."/>
        </authorList>
    </citation>
    <scope>PHOSPHORYLATION [LARGE SCALE ANALYSIS] AT SER-249</scope>
    <scope>IDENTIFICATION BY MASS SPECTROMETRY [LARGE SCALE ANALYSIS]</scope>
    <source>
        <tissue>Cervix carcinoma</tissue>
        <tissue>Erythroleukemia</tissue>
    </source>
</reference>
<dbReference type="EC" id="3.1.4.-"/>
<dbReference type="EMBL" id="U14575">
    <property type="protein sequence ID" value="AAA64749.1"/>
    <property type="molecule type" value="mRNA"/>
</dbReference>
<dbReference type="EMBL" id="AF061958">
    <property type="protein sequence ID" value="AAD31541.1"/>
    <property type="molecule type" value="mRNA"/>
</dbReference>
<dbReference type="EMBL" id="AF061959">
    <property type="protein sequence ID" value="AAD31542.1"/>
    <property type="molecule type" value="mRNA"/>
</dbReference>
<dbReference type="EMBL" id="AF064757">
    <property type="protein sequence ID" value="AAD24669.1"/>
    <property type="molecule type" value="Genomic_DNA"/>
</dbReference>
<dbReference type="EMBL" id="AF064751">
    <property type="protein sequence ID" value="AAD24669.1"/>
    <property type="status" value="JOINED"/>
    <property type="molecule type" value="Genomic_DNA"/>
</dbReference>
<dbReference type="EMBL" id="AF064752">
    <property type="protein sequence ID" value="AAD24669.1"/>
    <property type="status" value="JOINED"/>
    <property type="molecule type" value="Genomic_DNA"/>
</dbReference>
<dbReference type="EMBL" id="AF064753">
    <property type="protein sequence ID" value="AAD24669.1"/>
    <property type="status" value="JOINED"/>
    <property type="molecule type" value="Genomic_DNA"/>
</dbReference>
<dbReference type="EMBL" id="AF064754">
    <property type="protein sequence ID" value="AAD24669.1"/>
    <property type="status" value="JOINED"/>
    <property type="molecule type" value="Genomic_DNA"/>
</dbReference>
<dbReference type="EMBL" id="AF064755">
    <property type="protein sequence ID" value="AAD24669.1"/>
    <property type="status" value="JOINED"/>
    <property type="molecule type" value="Genomic_DNA"/>
</dbReference>
<dbReference type="EMBL" id="AF064756">
    <property type="protein sequence ID" value="AAD24669.1"/>
    <property type="status" value="JOINED"/>
    <property type="molecule type" value="Genomic_DNA"/>
</dbReference>
<dbReference type="EMBL" id="AF064757">
    <property type="protein sequence ID" value="AAD24670.1"/>
    <property type="molecule type" value="Genomic_DNA"/>
</dbReference>
<dbReference type="EMBL" id="AF064754">
    <property type="protein sequence ID" value="AAD24670.1"/>
    <property type="status" value="JOINED"/>
    <property type="molecule type" value="Genomic_DNA"/>
</dbReference>
<dbReference type="EMBL" id="AF064755">
    <property type="protein sequence ID" value="AAD24670.1"/>
    <property type="status" value="JOINED"/>
    <property type="molecule type" value="Genomic_DNA"/>
</dbReference>
<dbReference type="EMBL" id="AF064756">
    <property type="protein sequence ID" value="AAD24670.1"/>
    <property type="status" value="JOINED"/>
    <property type="molecule type" value="Genomic_DNA"/>
</dbReference>
<dbReference type="EMBL" id="AF126488">
    <property type="protein sequence ID" value="AAD22486.1"/>
    <property type="molecule type" value="mRNA"/>
</dbReference>
<dbReference type="EMBL" id="AK292077">
    <property type="protein sequence ID" value="BAF84766.1"/>
    <property type="molecule type" value="mRNA"/>
</dbReference>
<dbReference type="EMBL" id="AL020997">
    <property type="status" value="NOT_ANNOTATED_CDS"/>
    <property type="molecule type" value="Genomic_DNA"/>
</dbReference>
<dbReference type="EMBL" id="AL109927">
    <property type="status" value="NOT_ANNOTATED_CDS"/>
    <property type="molecule type" value="Genomic_DNA"/>
</dbReference>
<dbReference type="EMBL" id="CH471059">
    <property type="protein sequence ID" value="EAX07731.1"/>
    <property type="molecule type" value="Genomic_DNA"/>
</dbReference>
<dbReference type="EMBL" id="CH471059">
    <property type="protein sequence ID" value="EAX07732.1"/>
    <property type="molecule type" value="Genomic_DNA"/>
</dbReference>
<dbReference type="EMBL" id="BC001597">
    <property type="protein sequence ID" value="AAH01597.1"/>
    <property type="molecule type" value="mRNA"/>
</dbReference>
<dbReference type="EMBL" id="BC013360">
    <property type="protein sequence ID" value="AAH13360.1"/>
    <property type="molecule type" value="mRNA"/>
</dbReference>
<dbReference type="CCDS" id="CCDS311.1">
    <molecule id="Q12972-1"/>
</dbReference>
<dbReference type="CCDS" id="CCDS312.1">
    <molecule id="Q12972-2"/>
</dbReference>
<dbReference type="CCDS" id="CCDS313.1">
    <molecule id="Q12972-3"/>
</dbReference>
<dbReference type="PIR" id="I38856">
    <property type="entry name" value="I38856"/>
</dbReference>
<dbReference type="RefSeq" id="NP_002704.1">
    <molecule id="Q12972-3"/>
    <property type="nucleotide sequence ID" value="NM_002713.4"/>
</dbReference>
<dbReference type="RefSeq" id="NP_054829.2">
    <molecule id="Q12972-1"/>
    <property type="nucleotide sequence ID" value="NM_014110.4"/>
</dbReference>
<dbReference type="RefSeq" id="NP_612568.1">
    <molecule id="Q12972-2"/>
    <property type="nucleotide sequence ID" value="NM_138558.3"/>
</dbReference>
<dbReference type="RefSeq" id="XP_016857083.1">
    <property type="nucleotide sequence ID" value="XM_017001594.1"/>
</dbReference>
<dbReference type="PDB" id="3V4Y">
    <property type="method" value="X-ray"/>
    <property type="resolution" value="2.10 A"/>
    <property type="chains" value="B/D/F/H=158-216"/>
</dbReference>
<dbReference type="PDBsum" id="3V4Y"/>
<dbReference type="BMRB" id="Q12972"/>
<dbReference type="SMR" id="Q12972"/>
<dbReference type="BioGRID" id="111503">
    <property type="interactions" value="107"/>
</dbReference>
<dbReference type="CORUM" id="Q12972"/>
<dbReference type="DIP" id="DIP-40815N"/>
<dbReference type="ELM" id="Q12972"/>
<dbReference type="FunCoup" id="Q12972">
    <property type="interactions" value="5534"/>
</dbReference>
<dbReference type="IntAct" id="Q12972">
    <property type="interactions" value="50"/>
</dbReference>
<dbReference type="MINT" id="Q12972"/>
<dbReference type="STRING" id="9606.ENSP00000311677"/>
<dbReference type="GlyCosmos" id="Q12972">
    <property type="glycosylation" value="1 site, 1 glycan"/>
</dbReference>
<dbReference type="GlyGen" id="Q12972">
    <property type="glycosylation" value="2 sites, 1 O-linked glycan (1 site)"/>
</dbReference>
<dbReference type="iPTMnet" id="Q12972"/>
<dbReference type="MetOSite" id="Q12972"/>
<dbReference type="PhosphoSitePlus" id="Q12972"/>
<dbReference type="BioMuta" id="PPP1R8"/>
<dbReference type="DMDM" id="19863082"/>
<dbReference type="jPOST" id="Q12972"/>
<dbReference type="MassIVE" id="Q12972"/>
<dbReference type="PaxDb" id="9606-ENSP00000311677"/>
<dbReference type="PeptideAtlas" id="Q12972"/>
<dbReference type="ProteomicsDB" id="59067">
    <molecule id="Q12972-1"/>
</dbReference>
<dbReference type="ProteomicsDB" id="59068">
    <molecule id="Q12972-2"/>
</dbReference>
<dbReference type="ProteomicsDB" id="59069">
    <molecule id="Q12972-3"/>
</dbReference>
<dbReference type="Pumba" id="Q12972"/>
<dbReference type="Antibodypedia" id="16435">
    <property type="antibodies" value="426 antibodies from 37 providers"/>
</dbReference>
<dbReference type="DNASU" id="5511"/>
<dbReference type="Ensembl" id="ENST00000236412.11">
    <molecule id="Q12972-3"/>
    <property type="protein sequence ID" value="ENSP00000236412.7"/>
    <property type="gene ID" value="ENSG00000117751.18"/>
</dbReference>
<dbReference type="Ensembl" id="ENST00000311772.10">
    <molecule id="Q12972-1"/>
    <property type="protein sequence ID" value="ENSP00000311677.5"/>
    <property type="gene ID" value="ENSG00000117751.18"/>
</dbReference>
<dbReference type="Ensembl" id="ENST00000373931.8">
    <molecule id="Q12972-2"/>
    <property type="protein sequence ID" value="ENSP00000363042.4"/>
    <property type="gene ID" value="ENSG00000117751.18"/>
</dbReference>
<dbReference type="GeneID" id="5511"/>
<dbReference type="KEGG" id="hsa:5511"/>
<dbReference type="MANE-Select" id="ENST00000311772.10">
    <property type="protein sequence ID" value="ENSP00000311677.5"/>
    <property type="RefSeq nucleotide sequence ID" value="NM_014110.5"/>
    <property type="RefSeq protein sequence ID" value="NP_054829.2"/>
</dbReference>
<dbReference type="UCSC" id="uc001bov.3">
    <molecule id="Q12972-1"/>
    <property type="organism name" value="human"/>
</dbReference>
<dbReference type="AGR" id="HGNC:9296"/>
<dbReference type="CTD" id="5511"/>
<dbReference type="DisGeNET" id="5511"/>
<dbReference type="GeneCards" id="PPP1R8"/>
<dbReference type="HGNC" id="HGNC:9296">
    <property type="gene designation" value="PPP1R8"/>
</dbReference>
<dbReference type="HPA" id="ENSG00000117751">
    <property type="expression patterns" value="Low tissue specificity"/>
</dbReference>
<dbReference type="MIM" id="602636">
    <property type="type" value="gene"/>
</dbReference>
<dbReference type="neXtProt" id="NX_Q12972"/>
<dbReference type="OpenTargets" id="ENSG00000117751"/>
<dbReference type="PharmGKB" id="PA33659"/>
<dbReference type="VEuPathDB" id="HostDB:ENSG00000117751"/>
<dbReference type="eggNOG" id="KOG1880">
    <property type="taxonomic scope" value="Eukaryota"/>
</dbReference>
<dbReference type="GeneTree" id="ENSGT00940000156115"/>
<dbReference type="HOGENOM" id="CLU_069628_0_0_1"/>
<dbReference type="InParanoid" id="Q12972"/>
<dbReference type="OMA" id="HREMPPP"/>
<dbReference type="OrthoDB" id="4096268at2759"/>
<dbReference type="PAN-GO" id="Q12972">
    <property type="GO annotations" value="4 GO annotations based on evolutionary models"/>
</dbReference>
<dbReference type="PhylomeDB" id="Q12972"/>
<dbReference type="TreeFam" id="TF105539"/>
<dbReference type="PathwayCommons" id="Q12972"/>
<dbReference type="Reactome" id="R-HSA-72163">
    <property type="pathway name" value="mRNA Splicing - Major Pathway"/>
</dbReference>
<dbReference type="SignaLink" id="Q12972"/>
<dbReference type="SIGNOR" id="Q12972"/>
<dbReference type="BioGRID-ORCS" id="5511">
    <property type="hits" value="746 hits in 1194 CRISPR screens"/>
</dbReference>
<dbReference type="CD-CODE" id="DEE660B4">
    <property type="entry name" value="Stress granule"/>
</dbReference>
<dbReference type="ChiTaRS" id="PPP1R8">
    <property type="organism name" value="human"/>
</dbReference>
<dbReference type="EvolutionaryTrace" id="Q12972"/>
<dbReference type="GeneWiki" id="PPP1R8"/>
<dbReference type="GenomeRNAi" id="5511"/>
<dbReference type="Pharos" id="Q12972">
    <property type="development level" value="Tbio"/>
</dbReference>
<dbReference type="PRO" id="PR:Q12972"/>
<dbReference type="Proteomes" id="UP000005640">
    <property type="component" value="Chromosome 1"/>
</dbReference>
<dbReference type="RNAct" id="Q12972">
    <property type="molecule type" value="protein"/>
</dbReference>
<dbReference type="Bgee" id="ENSG00000117751">
    <property type="expression patterns" value="Expressed in calcaneal tendon and 216 other cell types or tissues"/>
</dbReference>
<dbReference type="ExpressionAtlas" id="Q12972">
    <property type="expression patterns" value="baseline and differential"/>
</dbReference>
<dbReference type="GO" id="GO:0005737">
    <property type="term" value="C:cytoplasm"/>
    <property type="evidence" value="ECO:0007669"/>
    <property type="project" value="UniProtKB-SubCell"/>
</dbReference>
<dbReference type="GO" id="GO:0016607">
    <property type="term" value="C:nuclear speck"/>
    <property type="evidence" value="ECO:0000314"/>
    <property type="project" value="HPA"/>
</dbReference>
<dbReference type="GO" id="GO:0005654">
    <property type="term" value="C:nucleoplasm"/>
    <property type="evidence" value="ECO:0000314"/>
    <property type="project" value="HPA"/>
</dbReference>
<dbReference type="GO" id="GO:0005634">
    <property type="term" value="C:nucleus"/>
    <property type="evidence" value="ECO:0000304"/>
    <property type="project" value="ProtInc"/>
</dbReference>
<dbReference type="GO" id="GO:0005681">
    <property type="term" value="C:spliceosomal complex"/>
    <property type="evidence" value="ECO:0007669"/>
    <property type="project" value="UniProtKB-KW"/>
</dbReference>
<dbReference type="GO" id="GO:0003677">
    <property type="term" value="F:DNA binding"/>
    <property type="evidence" value="ECO:0007669"/>
    <property type="project" value="UniProtKB-KW"/>
</dbReference>
<dbReference type="GO" id="GO:0004519">
    <property type="term" value="F:endonuclease activity"/>
    <property type="evidence" value="ECO:0007669"/>
    <property type="project" value="UniProtKB-KW"/>
</dbReference>
<dbReference type="GO" id="GO:0140678">
    <property type="term" value="F:molecular function inhibitor activity"/>
    <property type="evidence" value="ECO:0000269"/>
    <property type="project" value="DisProt"/>
</dbReference>
<dbReference type="GO" id="GO:0003729">
    <property type="term" value="F:mRNA binding"/>
    <property type="evidence" value="ECO:0000318"/>
    <property type="project" value="GO_Central"/>
</dbReference>
<dbReference type="GO" id="GO:0004865">
    <property type="term" value="F:protein serine/threonine phosphatase inhibitor activity"/>
    <property type="evidence" value="ECO:0000318"/>
    <property type="project" value="GO_Central"/>
</dbReference>
<dbReference type="GO" id="GO:0008995">
    <property type="term" value="F:ribonuclease E activity"/>
    <property type="evidence" value="ECO:0000304"/>
    <property type="project" value="ProtInc"/>
</dbReference>
<dbReference type="GO" id="GO:0003723">
    <property type="term" value="F:RNA binding"/>
    <property type="evidence" value="ECO:0000304"/>
    <property type="project" value="ProtInc"/>
</dbReference>
<dbReference type="GO" id="GO:0004521">
    <property type="term" value="F:RNA endonuclease activity"/>
    <property type="evidence" value="ECO:0000314"/>
    <property type="project" value="UniProtKB"/>
</dbReference>
<dbReference type="GO" id="GO:0008283">
    <property type="term" value="P:cell population proliferation"/>
    <property type="evidence" value="ECO:0007669"/>
    <property type="project" value="Ensembl"/>
</dbReference>
<dbReference type="GO" id="GO:0006397">
    <property type="term" value="P:mRNA processing"/>
    <property type="evidence" value="ECO:0007669"/>
    <property type="project" value="UniProtKB-KW"/>
</dbReference>
<dbReference type="GO" id="GO:0006401">
    <property type="term" value="P:RNA catabolic process"/>
    <property type="evidence" value="ECO:0000304"/>
    <property type="project" value="ProtInc"/>
</dbReference>
<dbReference type="GO" id="GO:0008380">
    <property type="term" value="P:RNA splicing"/>
    <property type="evidence" value="ECO:0007669"/>
    <property type="project" value="UniProtKB-KW"/>
</dbReference>
<dbReference type="CDD" id="cd22674">
    <property type="entry name" value="FHA_PPP1R8"/>
    <property type="match status" value="1"/>
</dbReference>
<dbReference type="DisProt" id="DP00937"/>
<dbReference type="FunFam" id="2.60.200.20:FF:000012">
    <property type="entry name" value="Nuclear inhibitor of protein phosphatase 1"/>
    <property type="match status" value="1"/>
</dbReference>
<dbReference type="Gene3D" id="2.60.200.20">
    <property type="match status" value="1"/>
</dbReference>
<dbReference type="Gene3D" id="6.10.250.1290">
    <property type="match status" value="1"/>
</dbReference>
<dbReference type="IDEAL" id="IID00666"/>
<dbReference type="InterPro" id="IPR050923">
    <property type="entry name" value="Cell_Proc_Reg/RNA_Proc"/>
</dbReference>
<dbReference type="InterPro" id="IPR000253">
    <property type="entry name" value="FHA_dom"/>
</dbReference>
<dbReference type="InterPro" id="IPR008984">
    <property type="entry name" value="SMAD_FHA_dom_sf"/>
</dbReference>
<dbReference type="PANTHER" id="PTHR23308">
    <property type="entry name" value="NUCLEAR INHIBITOR OF PROTEIN PHOSPHATASE-1"/>
    <property type="match status" value="1"/>
</dbReference>
<dbReference type="Pfam" id="PF00498">
    <property type="entry name" value="FHA"/>
    <property type="match status" value="1"/>
</dbReference>
<dbReference type="SMART" id="SM00240">
    <property type="entry name" value="FHA"/>
    <property type="match status" value="1"/>
</dbReference>
<dbReference type="SUPFAM" id="SSF49879">
    <property type="entry name" value="SMAD/FHA domain"/>
    <property type="match status" value="1"/>
</dbReference>
<dbReference type="PROSITE" id="PS50006">
    <property type="entry name" value="FHA_DOMAIN"/>
    <property type="match status" value="1"/>
</dbReference>
<name>PP1R8_HUMAN</name>
<comment type="function">
    <text>Inhibitor subunit of the major nuclear protein phosphatase-1 (PP-1). It has RNA-binding activity but does not cleave RNA and may target PP-1 to RNA-associated substrates. May also be involved in pre-mRNA splicing. Binds DNA and might act as a transcriptional repressor. Seems to be required for cell proliferation.</text>
</comment>
<comment type="function">
    <text>Isoform Gamma is a site-specific single-strand endoribonuclease that cleaves single strand RNA 3' to purines and pyrimidines in A+U-rich regions. It generates 5'-phosphate termini at the site of cleavage. This isoform does not inhibit PP-1. May be implicated in mRNA splicing.</text>
</comment>
<comment type="cofactor">
    <cofactor>
        <name>Mg(2+)</name>
        <dbReference type="ChEBI" id="CHEBI:18420"/>
    </cofactor>
    <text>Endoribonuclease function is magnesium-dependent.</text>
</comment>
<comment type="subunit">
    <text evidence="6 9 10 11 12 13">Interacts with phosphorylated CDC5L, SF3B1 and MELK. Interacts with EED, in a nucleic acid-stimulated manner. Part of a complex consisting of PPP1R8, EED, HDAC2 and PP-1. Part of the spliceosome. Interacts with PPP1CA, PPP1CB and PPP1CC.</text>
</comment>
<comment type="interaction">
    <interactant intactId="EBI-716633">
        <id>Q12972</id>
    </interactant>
    <interactant intactId="EBI-743771">
        <id>Q92624</id>
        <label>APPBP2</label>
    </interactant>
    <organismsDiffer>false</organismsDiffer>
    <experiments>3</experiments>
</comment>
<comment type="interaction">
    <interactant intactId="EBI-716633">
        <id>Q12972</id>
    </interactant>
    <interactant intactId="EBI-5323863">
        <id>Q5S007</id>
        <label>LRRK2</label>
    </interactant>
    <organismsDiffer>false</organismsDiffer>
    <experiments>3</experiments>
</comment>
<comment type="interaction">
    <interactant intactId="EBI-716633">
        <id>Q12972</id>
    </interactant>
    <interactant intactId="EBI-357253">
        <id>P62136</id>
        <label>PPP1CA</label>
    </interactant>
    <organismsDiffer>false</organismsDiffer>
    <experiments>9</experiments>
</comment>
<comment type="interaction">
    <interactant intactId="EBI-16012257">
        <id>Q12972-1</id>
    </interactant>
    <interactant intactId="EBI-357253">
        <id>P62136</id>
        <label>PPP1CA</label>
    </interactant>
    <organismsDiffer>false</organismsDiffer>
    <experiments>6</experiments>
</comment>
<comment type="interaction">
    <interactant intactId="EBI-12252736">
        <id>Q12972-2</id>
    </interactant>
    <interactant intactId="EBI-743771">
        <id>Q92624</id>
        <label>APPBP2</label>
    </interactant>
    <organismsDiffer>false</organismsDiffer>
    <experiments>3</experiments>
</comment>
<comment type="interaction">
    <interactant intactId="EBI-12252736">
        <id>Q12972-2</id>
    </interactant>
    <interactant intactId="EBI-357253">
        <id>P62136</id>
        <label>PPP1CA</label>
    </interactant>
    <organismsDiffer>false</organismsDiffer>
    <experiments>7</experiments>
</comment>
<comment type="interaction">
    <interactant intactId="EBI-12252736">
        <id>Q12972-2</id>
    </interactant>
    <interactant intactId="EBI-356283">
        <id>P36873</id>
        <label>PPP1CC</label>
    </interactant>
    <organismsDiffer>false</organismsDiffer>
    <experiments>3</experiments>
</comment>
<comment type="interaction">
    <interactant intactId="EBI-12252736">
        <id>Q12972-2</id>
    </interactant>
    <interactant intactId="EBI-743502">
        <id>Q8WWV3</id>
        <label>RTN4IP1</label>
    </interactant>
    <organismsDiffer>false</organismsDiffer>
    <experiments>3</experiments>
</comment>
<comment type="subcellular location">
    <subcellularLocation>
        <location>Nucleus</location>
    </subcellularLocation>
    <subcellularLocation>
        <location>Nucleus speckle</location>
    </subcellularLocation>
    <text>Primarily, but not exclusively, nuclear.</text>
</comment>
<comment type="subcellular location">
    <molecule>Isoform Gamma</molecule>
    <subcellularLocation>
        <location>Cytoplasm</location>
    </subcellularLocation>
    <text>Found mainly in the cytoplasm.</text>
</comment>
<comment type="alternative products">
    <event type="alternative splicing"/>
    <isoform>
        <id>Q12972-1</id>
        <name>Alpha</name>
        <sequence type="displayed"/>
    </isoform>
    <isoform>
        <id>Q12972-2</id>
        <name>Beta</name>
        <name>Delta</name>
        <sequence type="described" ref="VSP_005119"/>
    </isoform>
    <isoform>
        <id>Q12972-3</id>
        <name>Gamma</name>
        <name>ARD-1</name>
        <sequence type="described" ref="VSP_005120"/>
    </isoform>
</comment>
<comment type="tissue specificity">
    <text evidence="5 14">Ubiquitously expressed, with highest levels in heart and skeletal muscle, followed by brain, placenta, lung, liver and pancreas. Less abundant in kidney. The concentration and ratio between isoforms is cell-type dependent. Isoform Alpha (&gt;90%) and isoform Beta were found in brain, heart and kidney. Isoform Gamma is mainly found in B-cells and T-lymphocytes, and has been found in 293 embryonic kidney cells.</text>
</comment>
<comment type="domain">
    <text>Has a basic N- and C-terminal and an acidic central domain.</text>
</comment>
<comment type="domain">
    <text evidence="1">The FHA domain mediates interactions with threonine-phosphorylated MELK.</text>
</comment>
<comment type="PTM">
    <text evidence="1 8">May be inactivated by phosphorylation on Ser-199 or Ser-204 (By similarity). Phosphorylated by Lyn in vitro on Tyr-264, and also on Tyr-335 in the presence of RNA.</text>
</comment>
<comment type="miscellaneous">
    <text>A synthetic peptide, NIPP-1(330-351), is able to inhibit PP-1. Phosphorylation of Tyr-335 reduces PP-1 inhibition, whereas phosphorylation of Thr-346 or Ser-348 has no effect.</text>
</comment>
<comment type="online information" name="Atlas of Genetics and Cytogenetics in Oncology and Haematology">
    <link uri="https://atlasgeneticsoncology.org/gene/41811/PPP1R8"/>
</comment>
<evidence type="ECO:0000250" key="1"/>
<evidence type="ECO:0000250" key="2">
    <source>
        <dbReference type="UniProtKB" id="Q28147"/>
    </source>
</evidence>
<evidence type="ECO:0000255" key="3">
    <source>
        <dbReference type="PROSITE-ProRule" id="PRU00086"/>
    </source>
</evidence>
<evidence type="ECO:0000256" key="4">
    <source>
        <dbReference type="SAM" id="MobiDB-lite"/>
    </source>
</evidence>
<evidence type="ECO:0000269" key="5">
    <source>
    </source>
</evidence>
<evidence type="ECO:0000269" key="6">
    <source>
    </source>
</evidence>
<evidence type="ECO:0000269" key="7">
    <source>
    </source>
</evidence>
<evidence type="ECO:0000269" key="8">
    <source>
    </source>
</evidence>
<evidence type="ECO:0000269" key="9">
    <source>
    </source>
</evidence>
<evidence type="ECO:0000269" key="10">
    <source>
    </source>
</evidence>
<evidence type="ECO:0000269" key="11">
    <source>
    </source>
</evidence>
<evidence type="ECO:0000269" key="12">
    <source>
    </source>
</evidence>
<evidence type="ECO:0000269" key="13">
    <source>
    </source>
</evidence>
<evidence type="ECO:0000269" key="14">
    <source>
    </source>
</evidence>
<evidence type="ECO:0000303" key="15">
    <source>
    </source>
</evidence>
<evidence type="ECO:0000303" key="16">
    <source>
    </source>
</evidence>
<evidence type="ECO:0000303" key="17">
    <source>
    </source>
</evidence>
<evidence type="ECO:0000305" key="18">
    <source>
    </source>
</evidence>
<evidence type="ECO:0007744" key="19">
    <source>
    </source>
</evidence>
<evidence type="ECO:0007829" key="20">
    <source>
        <dbReference type="PDB" id="3V4Y"/>
    </source>
</evidence>
<keyword id="KW-0002">3D-structure</keyword>
<keyword id="KW-0025">Alternative splicing</keyword>
<keyword id="KW-0963">Cytoplasm</keyword>
<keyword id="KW-0238">DNA-binding</keyword>
<keyword id="KW-0255">Endonuclease</keyword>
<keyword id="KW-0378">Hydrolase</keyword>
<keyword id="KW-0460">Magnesium</keyword>
<keyword id="KW-0507">mRNA processing</keyword>
<keyword id="KW-0508">mRNA splicing</keyword>
<keyword id="KW-0540">Nuclease</keyword>
<keyword id="KW-0539">Nucleus</keyword>
<keyword id="KW-0597">Phosphoprotein</keyword>
<keyword id="KW-0650">Protein phosphatase inhibitor</keyword>
<keyword id="KW-1267">Proteomics identification</keyword>
<keyword id="KW-1185">Reference proteome</keyword>
<keyword id="KW-0677">Repeat</keyword>
<keyword id="KW-0678">Repressor</keyword>
<keyword id="KW-0694">RNA-binding</keyword>
<keyword id="KW-0747">Spliceosome</keyword>
<keyword id="KW-0804">Transcription</keyword>
<keyword id="KW-0805">Transcription regulation</keyword>